<reference key="1">
    <citation type="journal article" date="2007" name="Proc. Natl. Acad. Sci. U.S.A.">
        <title>Genomic and metabolic adaptations of Methanobrevibacter smithii to the human gut.</title>
        <authorList>
            <person name="Samuel B.S."/>
            <person name="Hansen E.E."/>
            <person name="Manchester J.K."/>
            <person name="Coutinho P.M."/>
            <person name="Henrissat B."/>
            <person name="Fulton R."/>
            <person name="Latreille P."/>
            <person name="Kim K."/>
            <person name="Wilson R.K."/>
            <person name="Gordon J.I."/>
        </authorList>
    </citation>
    <scope>NUCLEOTIDE SEQUENCE [LARGE SCALE GENOMIC DNA]</scope>
    <source>
        <strain>ATCC 35061 / DSM 861 / OCM 144 / PS</strain>
    </source>
</reference>
<evidence type="ECO:0000255" key="1">
    <source>
        <dbReference type="HAMAP-Rule" id="MF_00497"/>
    </source>
</evidence>
<dbReference type="EC" id="1.1.1.261" evidence="1"/>
<dbReference type="EMBL" id="CP000678">
    <property type="protein sequence ID" value="ABQ86491.1"/>
    <property type="molecule type" value="Genomic_DNA"/>
</dbReference>
<dbReference type="RefSeq" id="WP_011953805.1">
    <property type="nucleotide sequence ID" value="NZ_CP117965.1"/>
</dbReference>
<dbReference type="SMR" id="A5UJW3"/>
<dbReference type="STRING" id="420247.Msm_0286"/>
<dbReference type="EnsemblBacteria" id="ABQ86491">
    <property type="protein sequence ID" value="ABQ86491"/>
    <property type="gene ID" value="Msm_0286"/>
</dbReference>
<dbReference type="KEGG" id="msi:Msm_0286"/>
<dbReference type="PATRIC" id="fig|420247.28.peg.289"/>
<dbReference type="eggNOG" id="arCOG00982">
    <property type="taxonomic scope" value="Archaea"/>
</dbReference>
<dbReference type="HOGENOM" id="CLU_038362_0_0_2"/>
<dbReference type="UniPathway" id="UPA00940"/>
<dbReference type="Proteomes" id="UP000001992">
    <property type="component" value="Chromosome"/>
</dbReference>
<dbReference type="GO" id="GO:0005737">
    <property type="term" value="C:cytoplasm"/>
    <property type="evidence" value="ECO:0007669"/>
    <property type="project" value="UniProtKB-SubCell"/>
</dbReference>
<dbReference type="GO" id="GO:0106357">
    <property type="term" value="F:glycerol-1-phosphate dehydrogenase (NAD+) activity"/>
    <property type="evidence" value="ECO:0007669"/>
    <property type="project" value="RHEA"/>
</dbReference>
<dbReference type="GO" id="GO:0106358">
    <property type="term" value="F:glycerol-1-phosphate dehydrogenase (NADP+) activity"/>
    <property type="evidence" value="ECO:0007669"/>
    <property type="project" value="RHEA"/>
</dbReference>
<dbReference type="GO" id="GO:0046872">
    <property type="term" value="F:metal ion binding"/>
    <property type="evidence" value="ECO:0007669"/>
    <property type="project" value="UniProtKB-KW"/>
</dbReference>
<dbReference type="GO" id="GO:0006650">
    <property type="term" value="P:glycerophospholipid metabolic process"/>
    <property type="evidence" value="ECO:0007669"/>
    <property type="project" value="UniProtKB-UniRule"/>
</dbReference>
<dbReference type="GO" id="GO:0008654">
    <property type="term" value="P:phospholipid biosynthetic process"/>
    <property type="evidence" value="ECO:0007669"/>
    <property type="project" value="UniProtKB-KW"/>
</dbReference>
<dbReference type="CDD" id="cd08173">
    <property type="entry name" value="Gro1PDH"/>
    <property type="match status" value="1"/>
</dbReference>
<dbReference type="Gene3D" id="3.40.50.1970">
    <property type="match status" value="1"/>
</dbReference>
<dbReference type="Gene3D" id="1.20.1090.10">
    <property type="entry name" value="Dehydroquinate synthase-like - alpha domain"/>
    <property type="match status" value="1"/>
</dbReference>
<dbReference type="HAMAP" id="MF_00497_A">
    <property type="entry name" value="G1P_dehydrogenase_A"/>
    <property type="match status" value="1"/>
</dbReference>
<dbReference type="InterPro" id="IPR023002">
    <property type="entry name" value="G1P_dehydrogenase_arc"/>
</dbReference>
<dbReference type="InterPro" id="IPR032837">
    <property type="entry name" value="G1PDH"/>
</dbReference>
<dbReference type="InterPro" id="IPR016205">
    <property type="entry name" value="Glycerol_DH"/>
</dbReference>
<dbReference type="NCBIfam" id="NF002022">
    <property type="entry name" value="PRK00843.1"/>
    <property type="match status" value="1"/>
</dbReference>
<dbReference type="PANTHER" id="PTHR43616">
    <property type="entry name" value="GLYCEROL DEHYDROGENASE"/>
    <property type="match status" value="1"/>
</dbReference>
<dbReference type="PANTHER" id="PTHR43616:SF5">
    <property type="entry name" value="GLYCEROL DEHYDROGENASE 1"/>
    <property type="match status" value="1"/>
</dbReference>
<dbReference type="Pfam" id="PF13685">
    <property type="entry name" value="Fe-ADH_2"/>
    <property type="match status" value="1"/>
</dbReference>
<dbReference type="PIRSF" id="PIRSF000112">
    <property type="entry name" value="Glycerol_dehydrogenase"/>
    <property type="match status" value="1"/>
</dbReference>
<dbReference type="SUPFAM" id="SSF56796">
    <property type="entry name" value="Dehydroquinate synthase-like"/>
    <property type="match status" value="1"/>
</dbReference>
<name>G1PDH_METS3</name>
<accession>A5UJW3</accession>
<organism>
    <name type="scientific">Methanobrevibacter smithii (strain ATCC 35061 / DSM 861 / OCM 144 / PS)</name>
    <dbReference type="NCBI Taxonomy" id="420247"/>
    <lineage>
        <taxon>Archaea</taxon>
        <taxon>Methanobacteriati</taxon>
        <taxon>Methanobacteriota</taxon>
        <taxon>Methanomada group</taxon>
        <taxon>Methanobacteria</taxon>
        <taxon>Methanobacteriales</taxon>
        <taxon>Methanobacteriaceae</taxon>
        <taxon>Methanobrevibacter</taxon>
    </lineage>
</organism>
<gene>
    <name evidence="1" type="primary">egsA</name>
    <name type="ordered locus">Msm_0286</name>
</gene>
<sequence length="348" mass="37378">MNTRKIQMPREVYIGPDVIYETGEICKDLHLDNKVLVLTGPNTYDIAAKHAIESLENQDIEVDVKIVEKVSYDSVEEVSEMITSGTNVLGVGGGKVIDVAKLASYDKNVFFVSMPTTASHDGIVSPLASIKNPKTSTSAKAHAPIAVIADSKIIANSPFRLLSAGCADLISNFTAIKDWQLAHRLKNESYSESAASLSIMSAKMITDNVDSIKPGLEESARLVVKTLFSSGMAISIAGSSRPASGSEHTFSHALDKILDKPCLHGEQCGVGTILMMYLYGGDWKFIRDSLKAVGAPTSAKELGISDENVIDALTMAHTIRPERYTILGDNGISEDAAYELALKTGVIK</sequence>
<keyword id="KW-0963">Cytoplasm</keyword>
<keyword id="KW-0444">Lipid biosynthesis</keyword>
<keyword id="KW-0443">Lipid metabolism</keyword>
<keyword id="KW-0479">Metal-binding</keyword>
<keyword id="KW-0520">NAD</keyword>
<keyword id="KW-0521">NADP</keyword>
<keyword id="KW-0560">Oxidoreductase</keyword>
<keyword id="KW-0594">Phospholipid biosynthesis</keyword>
<keyword id="KW-1208">Phospholipid metabolism</keyword>
<keyword id="KW-0862">Zinc</keyword>
<feature type="chain" id="PRO_1000050603" description="Glycerol-1-phosphate dehydrogenase [NAD(P)+]">
    <location>
        <begin position="1"/>
        <end position="348"/>
    </location>
</feature>
<feature type="binding site" evidence="1">
    <location>
        <begin position="94"/>
        <end position="98"/>
    </location>
    <ligand>
        <name>NAD(+)</name>
        <dbReference type="ChEBI" id="CHEBI:57540"/>
    </ligand>
</feature>
<feature type="binding site" evidence="1">
    <location>
        <begin position="116"/>
        <end position="119"/>
    </location>
    <ligand>
        <name>NAD(+)</name>
        <dbReference type="ChEBI" id="CHEBI:57540"/>
    </ligand>
</feature>
<feature type="binding site" evidence="1">
    <location>
        <position position="121"/>
    </location>
    <ligand>
        <name>substrate</name>
    </ligand>
</feature>
<feature type="binding site" evidence="1">
    <location>
        <position position="125"/>
    </location>
    <ligand>
        <name>NAD(+)</name>
        <dbReference type="ChEBI" id="CHEBI:57540"/>
    </ligand>
</feature>
<feature type="binding site" evidence="1">
    <location>
        <position position="168"/>
    </location>
    <ligand>
        <name>substrate</name>
    </ligand>
</feature>
<feature type="binding site" evidence="1">
    <location>
        <position position="168"/>
    </location>
    <ligand>
        <name>Zn(2+)</name>
        <dbReference type="ChEBI" id="CHEBI:29105"/>
        <note>catalytic</note>
    </ligand>
</feature>
<feature type="binding site" evidence="1">
    <location>
        <position position="248"/>
    </location>
    <ligand>
        <name>Zn(2+)</name>
        <dbReference type="ChEBI" id="CHEBI:29105"/>
        <note>catalytic</note>
    </ligand>
</feature>
<feature type="binding site" evidence="1">
    <location>
        <position position="252"/>
    </location>
    <ligand>
        <name>substrate</name>
    </ligand>
</feature>
<feature type="binding site" evidence="1">
    <location>
        <position position="264"/>
    </location>
    <ligand>
        <name>Zn(2+)</name>
        <dbReference type="ChEBI" id="CHEBI:29105"/>
        <note>catalytic</note>
    </ligand>
</feature>
<protein>
    <recommendedName>
        <fullName evidence="1">Glycerol-1-phosphate dehydrogenase [NAD(P)+]</fullName>
        <shortName evidence="1">G1P dehydrogenase</shortName>
        <shortName evidence="1">G1PDH</shortName>
        <ecNumber evidence="1">1.1.1.261</ecNumber>
    </recommendedName>
    <alternativeName>
        <fullName evidence="1">Enantiomeric glycerophosphate synthase</fullName>
    </alternativeName>
    <alternativeName>
        <fullName evidence="1">sn-glycerol-1-phosphate dehydrogenase</fullName>
    </alternativeName>
</protein>
<proteinExistence type="inferred from homology"/>
<comment type="function">
    <text evidence="1">Catalyzes the NAD(P)H-dependent reduction of dihydroxyacetonephosphate (DHAP or glycerone phosphate) to glycerol 1-phosphate (G1P). The G1P thus generated is used as the glycerophosphate backbone of phospholipids in the cellular membranes of Archaea.</text>
</comment>
<comment type="catalytic activity">
    <reaction evidence="1">
        <text>sn-glycerol 1-phosphate + NAD(+) = dihydroxyacetone phosphate + NADH + H(+)</text>
        <dbReference type="Rhea" id="RHEA:21412"/>
        <dbReference type="ChEBI" id="CHEBI:15378"/>
        <dbReference type="ChEBI" id="CHEBI:57540"/>
        <dbReference type="ChEBI" id="CHEBI:57642"/>
        <dbReference type="ChEBI" id="CHEBI:57685"/>
        <dbReference type="ChEBI" id="CHEBI:57945"/>
        <dbReference type="EC" id="1.1.1.261"/>
    </reaction>
</comment>
<comment type="catalytic activity">
    <reaction evidence="1">
        <text>sn-glycerol 1-phosphate + NADP(+) = dihydroxyacetone phosphate + NADPH + H(+)</text>
        <dbReference type="Rhea" id="RHEA:21416"/>
        <dbReference type="ChEBI" id="CHEBI:15378"/>
        <dbReference type="ChEBI" id="CHEBI:57642"/>
        <dbReference type="ChEBI" id="CHEBI:57685"/>
        <dbReference type="ChEBI" id="CHEBI:57783"/>
        <dbReference type="ChEBI" id="CHEBI:58349"/>
        <dbReference type="EC" id="1.1.1.261"/>
    </reaction>
</comment>
<comment type="cofactor">
    <cofactor evidence="1">
        <name>Zn(2+)</name>
        <dbReference type="ChEBI" id="CHEBI:29105"/>
    </cofactor>
    <text evidence="1">Binds 1 zinc ion per subunit.</text>
</comment>
<comment type="pathway">
    <text evidence="1">Membrane lipid metabolism; glycerophospholipid metabolism.</text>
</comment>
<comment type="subunit">
    <text evidence="1">Homooctamer.</text>
</comment>
<comment type="subcellular location">
    <subcellularLocation>
        <location evidence="1">Cytoplasm</location>
    </subcellularLocation>
</comment>
<comment type="similarity">
    <text evidence="1">Belongs to the glycerol-1-phosphate dehydrogenase family.</text>
</comment>